<organism>
    <name type="scientific">Homo sapiens</name>
    <name type="common">Human</name>
    <dbReference type="NCBI Taxonomy" id="9606"/>
    <lineage>
        <taxon>Eukaryota</taxon>
        <taxon>Metazoa</taxon>
        <taxon>Chordata</taxon>
        <taxon>Craniata</taxon>
        <taxon>Vertebrata</taxon>
        <taxon>Euteleostomi</taxon>
        <taxon>Mammalia</taxon>
        <taxon>Eutheria</taxon>
        <taxon>Euarchontoglires</taxon>
        <taxon>Primates</taxon>
        <taxon>Haplorrhini</taxon>
        <taxon>Catarrhini</taxon>
        <taxon>Hominidae</taxon>
        <taxon>Homo</taxon>
    </lineage>
</organism>
<feature type="chain" id="PRO_0000154549" description="Interferon regulatory factor 2">
    <location>
        <begin position="1"/>
        <end position="349"/>
    </location>
</feature>
<feature type="DNA-binding region" description="IRF tryptophan pentad repeat" evidence="1">
    <location>
        <begin position="5"/>
        <end position="113"/>
    </location>
</feature>
<feature type="region of interest" description="Disordered" evidence="2">
    <location>
        <begin position="117"/>
        <end position="148"/>
    </location>
</feature>
<feature type="region of interest" description="Disordered" evidence="2">
    <location>
        <begin position="228"/>
        <end position="251"/>
    </location>
</feature>
<feature type="region of interest" description="Disordered" evidence="2">
    <location>
        <begin position="297"/>
        <end position="349"/>
    </location>
</feature>
<feature type="compositionally biased region" description="Basic and acidic residues" evidence="2">
    <location>
        <begin position="125"/>
        <end position="140"/>
    </location>
</feature>
<feature type="compositionally biased region" description="Polar residues" evidence="2">
    <location>
        <begin position="228"/>
        <end position="239"/>
    </location>
</feature>
<feature type="compositionally biased region" description="Low complexity" evidence="2">
    <location>
        <begin position="314"/>
        <end position="324"/>
    </location>
</feature>
<feature type="modified residue" description="N6-acetyllysine" evidence="4">
    <location>
        <position position="75"/>
    </location>
</feature>
<feature type="modified residue" description="N6-acetyllysine" evidence="4">
    <location>
        <position position="78"/>
    </location>
</feature>
<feature type="modified residue" description="Phosphoserine" evidence="10">
    <location>
        <position position="225"/>
    </location>
</feature>
<feature type="cross-link" description="Glycyl lysine isopeptide (Lys-Gly) (interchain with G-Cter in SUMO); alternate">
    <location>
        <position position="137"/>
    </location>
</feature>
<feature type="cross-link" description="Glycyl lysine isopeptide (Lys-Gly) (interchain with G-Cter in SUMO2); alternate" evidence="11 12">
    <location>
        <position position="137"/>
    </location>
</feature>
<feature type="cross-link" description="Glycyl lysine isopeptide (Lys-Gly) (interchain with G-Cter in SUMO)">
    <location>
        <position position="166"/>
    </location>
</feature>
<feature type="cross-link" description="Glycyl lysine isopeptide (Lys-Gly) (interchain with G-Cter in SUMO2)" evidence="12">
    <location>
        <position position="260"/>
    </location>
</feature>
<feature type="cross-link" description="Glycyl lysine isopeptide (Lys-Gly) (interchain with G-Cter in SUMO)">
    <location>
        <position position="293"/>
    </location>
</feature>
<feature type="splice variant" id="VSP_043965" description="In isoform 2." evidence="9">
    <location>
        <begin position="177"/>
        <end position="178"/>
    </location>
</feature>
<feature type="mutagenesis site" description="Diminished acetylation by both CREBBP/p300 and PCAF. Greatly reduced enhancement of H4 promoter activity." evidence="4">
    <original>K</original>
    <variation>R</variation>
    <location>
        <position position="75"/>
    </location>
</feature>
<feature type="mutagenesis site" description="Greatly diminished acetylation by PCAF. Lesser loss of acetylation by CREBBP/p300. Loss of DNA binding and no enhancement of H4 promoter activity." evidence="4">
    <original>K</original>
    <variation>R</variation>
    <location>
        <position position="78"/>
    </location>
</feature>
<feature type="mutagenesis site" description="Some loss of sumoylation. Increases IRF2-mediation activation of ISRE and H4 promoters. Increased inhibition of IRF1-mediated transcription. Additional small loss of sumoylation; when associated with R-166. Great loss of sumoylation; when associated with R-296. Abolishes sumoylation. Greatly increased activation of ISRE and H4 promoters and further increased ability to inhibit IRF1-mediated transcription; when associated with R-166 and R-293." evidence="7">
    <original>K</original>
    <variation>R</variation>
    <location>
        <position position="137"/>
    </location>
</feature>
<feature type="mutagenesis site" description="Little loss of sumoylation. Increases IRF2-mediation activation of ISRE and H4 promoters. Increased inhibition of IRF1-mediated transcription. Greater loss of sumoylation; when associated with R-137. Further loss of sumoylation; when associated with R-293. Abolishes sumoylation. Greatly increased activation of ISRE and H4 promoters and further increased ability to inhibit IRF1-mediated transcription; when associated with R-137 and R-293." evidence="7">
    <original>K</original>
    <variation>R</variation>
    <location>
        <position position="166"/>
    </location>
</feature>
<feature type="mutagenesis site" description="Some loss of sumoylation. Increases IRF2-mediation activation of ISRE and H4 promoters. Increased inhibition of IRF1-mediated transcription. Further small loss of sumoylation; when associated with R-166. Great loss of sumoylation; when associated with R-137. Abolishes sumoylation. Greatly increased activation of ISRE and H4 promoters and further increased ability to inhibit IRF1-mediated transcription; when associated with R-166 and R-293." evidence="7">
    <original>K</original>
    <variation>R</variation>
    <location>
        <position position="293"/>
    </location>
</feature>
<feature type="sequence conflict" description="In Ref. 1; CAA34073." evidence="9" ref="1">
    <original>W</original>
    <variation>R</variation>
    <location>
        <position position="58"/>
    </location>
</feature>
<protein>
    <recommendedName>
        <fullName>Interferon regulatory factor 2</fullName>
        <shortName>IRF-2</shortName>
    </recommendedName>
</protein>
<gene>
    <name type="primary">IRF2</name>
</gene>
<reference key="1">
    <citation type="journal article" date="1989" name="Nucleic Acids Res.">
        <title>Sequence of a cDNA coding for human IRF-2.</title>
        <authorList>
            <person name="Itoh S."/>
            <person name="Harada H."/>
            <person name="Fujita T."/>
            <person name="Mimura T."/>
            <person name="Taniguchi T."/>
        </authorList>
    </citation>
    <scope>NUCLEOTIDE SEQUENCE [MRNA] (ISOFORM 1)</scope>
    <source>
        <tissue>T-cell</tissue>
    </source>
</reference>
<reference key="2">
    <citation type="journal article" date="1994" name="J. Biol. Chem.">
        <title>Human interferon regulatory factor 2 gene. Intron-exon organization and functional analysis of 5'-flanking region.</title>
        <authorList>
            <person name="Cha Y."/>
            <person name="Deisseroth A.B."/>
        </authorList>
    </citation>
    <scope>NUCLEOTIDE SEQUENCE [GENOMIC DNA]</scope>
</reference>
<reference key="3">
    <citation type="submission" date="2003-05" db="EMBL/GenBank/DDBJ databases">
        <title>Cloning of human full-length CDSs in BD Creator(TM) system donor vector.</title>
        <authorList>
            <person name="Kalnine N."/>
            <person name="Chen X."/>
            <person name="Rolfs A."/>
            <person name="Halleck A."/>
            <person name="Hines L."/>
            <person name="Eisenstein S."/>
            <person name="Koundinya M."/>
            <person name="Raphael J."/>
            <person name="Moreira D."/>
            <person name="Kelley T."/>
            <person name="LaBaer J."/>
            <person name="Lin Y."/>
            <person name="Phelan M."/>
            <person name="Farmer A."/>
        </authorList>
    </citation>
    <scope>NUCLEOTIDE SEQUENCE [LARGE SCALE MRNA] (ISOFORM 1)</scope>
</reference>
<reference key="4">
    <citation type="journal article" date="2004" name="Nat. Genet.">
        <title>Complete sequencing and characterization of 21,243 full-length human cDNAs.</title>
        <authorList>
            <person name="Ota T."/>
            <person name="Suzuki Y."/>
            <person name="Nishikawa T."/>
            <person name="Otsuki T."/>
            <person name="Sugiyama T."/>
            <person name="Irie R."/>
            <person name="Wakamatsu A."/>
            <person name="Hayashi K."/>
            <person name="Sato H."/>
            <person name="Nagai K."/>
            <person name="Kimura K."/>
            <person name="Makita H."/>
            <person name="Sekine M."/>
            <person name="Obayashi M."/>
            <person name="Nishi T."/>
            <person name="Shibahara T."/>
            <person name="Tanaka T."/>
            <person name="Ishii S."/>
            <person name="Yamamoto J."/>
            <person name="Saito K."/>
            <person name="Kawai Y."/>
            <person name="Isono Y."/>
            <person name="Nakamura Y."/>
            <person name="Nagahari K."/>
            <person name="Murakami K."/>
            <person name="Yasuda T."/>
            <person name="Iwayanagi T."/>
            <person name="Wagatsuma M."/>
            <person name="Shiratori A."/>
            <person name="Sudo H."/>
            <person name="Hosoiri T."/>
            <person name="Kaku Y."/>
            <person name="Kodaira H."/>
            <person name="Kondo H."/>
            <person name="Sugawara M."/>
            <person name="Takahashi M."/>
            <person name="Kanda K."/>
            <person name="Yokoi T."/>
            <person name="Furuya T."/>
            <person name="Kikkawa E."/>
            <person name="Omura Y."/>
            <person name="Abe K."/>
            <person name="Kamihara K."/>
            <person name="Katsuta N."/>
            <person name="Sato K."/>
            <person name="Tanikawa M."/>
            <person name="Yamazaki M."/>
            <person name="Ninomiya K."/>
            <person name="Ishibashi T."/>
            <person name="Yamashita H."/>
            <person name="Murakawa K."/>
            <person name="Fujimori K."/>
            <person name="Tanai H."/>
            <person name="Kimata M."/>
            <person name="Watanabe M."/>
            <person name="Hiraoka S."/>
            <person name="Chiba Y."/>
            <person name="Ishida S."/>
            <person name="Ono Y."/>
            <person name="Takiguchi S."/>
            <person name="Watanabe S."/>
            <person name="Yosida M."/>
            <person name="Hotuta T."/>
            <person name="Kusano J."/>
            <person name="Kanehori K."/>
            <person name="Takahashi-Fujii A."/>
            <person name="Hara H."/>
            <person name="Tanase T.-O."/>
            <person name="Nomura Y."/>
            <person name="Togiya S."/>
            <person name="Komai F."/>
            <person name="Hara R."/>
            <person name="Takeuchi K."/>
            <person name="Arita M."/>
            <person name="Imose N."/>
            <person name="Musashino K."/>
            <person name="Yuuki H."/>
            <person name="Oshima A."/>
            <person name="Sasaki N."/>
            <person name="Aotsuka S."/>
            <person name="Yoshikawa Y."/>
            <person name="Matsunawa H."/>
            <person name="Ichihara T."/>
            <person name="Shiohata N."/>
            <person name="Sano S."/>
            <person name="Moriya S."/>
            <person name="Momiyama H."/>
            <person name="Satoh N."/>
            <person name="Takami S."/>
            <person name="Terashima Y."/>
            <person name="Suzuki O."/>
            <person name="Nakagawa S."/>
            <person name="Senoh A."/>
            <person name="Mizoguchi H."/>
            <person name="Goto Y."/>
            <person name="Shimizu F."/>
            <person name="Wakebe H."/>
            <person name="Hishigaki H."/>
            <person name="Watanabe T."/>
            <person name="Sugiyama A."/>
            <person name="Takemoto M."/>
            <person name="Kawakami B."/>
            <person name="Yamazaki M."/>
            <person name="Watanabe K."/>
            <person name="Kumagai A."/>
            <person name="Itakura S."/>
            <person name="Fukuzumi Y."/>
            <person name="Fujimori Y."/>
            <person name="Komiyama M."/>
            <person name="Tashiro H."/>
            <person name="Tanigami A."/>
            <person name="Fujiwara T."/>
            <person name="Ono T."/>
            <person name="Yamada K."/>
            <person name="Fujii Y."/>
            <person name="Ozaki K."/>
            <person name="Hirao M."/>
            <person name="Ohmori Y."/>
            <person name="Kawabata A."/>
            <person name="Hikiji T."/>
            <person name="Kobatake N."/>
            <person name="Inagaki H."/>
            <person name="Ikema Y."/>
            <person name="Okamoto S."/>
            <person name="Okitani R."/>
            <person name="Kawakami T."/>
            <person name="Noguchi S."/>
            <person name="Itoh T."/>
            <person name="Shigeta K."/>
            <person name="Senba T."/>
            <person name="Matsumura K."/>
            <person name="Nakajima Y."/>
            <person name="Mizuno T."/>
            <person name="Morinaga M."/>
            <person name="Sasaki M."/>
            <person name="Togashi T."/>
            <person name="Oyama M."/>
            <person name="Hata H."/>
            <person name="Watanabe M."/>
            <person name="Komatsu T."/>
            <person name="Mizushima-Sugano J."/>
            <person name="Satoh T."/>
            <person name="Shirai Y."/>
            <person name="Takahashi Y."/>
            <person name="Nakagawa K."/>
            <person name="Okumura K."/>
            <person name="Nagase T."/>
            <person name="Nomura N."/>
            <person name="Kikuchi H."/>
            <person name="Masuho Y."/>
            <person name="Yamashita R."/>
            <person name="Nakai K."/>
            <person name="Yada T."/>
            <person name="Nakamura Y."/>
            <person name="Ohara O."/>
            <person name="Isogai T."/>
            <person name="Sugano S."/>
        </authorList>
    </citation>
    <scope>NUCLEOTIDE SEQUENCE [LARGE SCALE MRNA] (ISOFORM 1)</scope>
    <source>
        <tissue>Trachea</tissue>
    </source>
</reference>
<reference key="5">
    <citation type="submission" date="2004-06" db="EMBL/GenBank/DDBJ databases">
        <title>Cloning of human full open reading frames in Gateway(TM) system entry vector (pDONR201).</title>
        <authorList>
            <person name="Ebert L."/>
            <person name="Schick M."/>
            <person name="Neubert P."/>
            <person name="Schatten R."/>
            <person name="Henze S."/>
            <person name="Korn B."/>
        </authorList>
    </citation>
    <scope>NUCLEOTIDE SEQUENCE [LARGE SCALE MRNA] (ISOFORM 1)</scope>
</reference>
<reference key="6">
    <citation type="journal article" date="2005" name="Nature">
        <title>Generation and annotation of the DNA sequences of human chromosomes 2 and 4.</title>
        <authorList>
            <person name="Hillier L.W."/>
            <person name="Graves T.A."/>
            <person name="Fulton R.S."/>
            <person name="Fulton L.A."/>
            <person name="Pepin K.H."/>
            <person name="Minx P."/>
            <person name="Wagner-McPherson C."/>
            <person name="Layman D."/>
            <person name="Wylie K."/>
            <person name="Sekhon M."/>
            <person name="Becker M.C."/>
            <person name="Fewell G.A."/>
            <person name="Delehaunty K.D."/>
            <person name="Miner T.L."/>
            <person name="Nash W.E."/>
            <person name="Kremitzki C."/>
            <person name="Oddy L."/>
            <person name="Du H."/>
            <person name="Sun H."/>
            <person name="Bradshaw-Cordum H."/>
            <person name="Ali J."/>
            <person name="Carter J."/>
            <person name="Cordes M."/>
            <person name="Harris A."/>
            <person name="Isak A."/>
            <person name="van Brunt A."/>
            <person name="Nguyen C."/>
            <person name="Du F."/>
            <person name="Courtney L."/>
            <person name="Kalicki J."/>
            <person name="Ozersky P."/>
            <person name="Abbott S."/>
            <person name="Armstrong J."/>
            <person name="Belter E.A."/>
            <person name="Caruso L."/>
            <person name="Cedroni M."/>
            <person name="Cotton M."/>
            <person name="Davidson T."/>
            <person name="Desai A."/>
            <person name="Elliott G."/>
            <person name="Erb T."/>
            <person name="Fronick C."/>
            <person name="Gaige T."/>
            <person name="Haakenson W."/>
            <person name="Haglund K."/>
            <person name="Holmes A."/>
            <person name="Harkins R."/>
            <person name="Kim K."/>
            <person name="Kruchowski S.S."/>
            <person name="Strong C.M."/>
            <person name="Grewal N."/>
            <person name="Goyea E."/>
            <person name="Hou S."/>
            <person name="Levy A."/>
            <person name="Martinka S."/>
            <person name="Mead K."/>
            <person name="McLellan M.D."/>
            <person name="Meyer R."/>
            <person name="Randall-Maher J."/>
            <person name="Tomlinson C."/>
            <person name="Dauphin-Kohlberg S."/>
            <person name="Kozlowicz-Reilly A."/>
            <person name="Shah N."/>
            <person name="Swearengen-Shahid S."/>
            <person name="Snider J."/>
            <person name="Strong J.T."/>
            <person name="Thompson J."/>
            <person name="Yoakum M."/>
            <person name="Leonard S."/>
            <person name="Pearman C."/>
            <person name="Trani L."/>
            <person name="Radionenko M."/>
            <person name="Waligorski J.E."/>
            <person name="Wang C."/>
            <person name="Rock S.M."/>
            <person name="Tin-Wollam A.-M."/>
            <person name="Maupin R."/>
            <person name="Latreille P."/>
            <person name="Wendl M.C."/>
            <person name="Yang S.-P."/>
            <person name="Pohl C."/>
            <person name="Wallis J.W."/>
            <person name="Spieth J."/>
            <person name="Bieri T.A."/>
            <person name="Berkowicz N."/>
            <person name="Nelson J.O."/>
            <person name="Osborne J."/>
            <person name="Ding L."/>
            <person name="Meyer R."/>
            <person name="Sabo A."/>
            <person name="Shotland Y."/>
            <person name="Sinha P."/>
            <person name="Wohldmann P.E."/>
            <person name="Cook L.L."/>
            <person name="Hickenbotham M.T."/>
            <person name="Eldred J."/>
            <person name="Williams D."/>
            <person name="Jones T.A."/>
            <person name="She X."/>
            <person name="Ciccarelli F.D."/>
            <person name="Izaurralde E."/>
            <person name="Taylor J."/>
            <person name="Schmutz J."/>
            <person name="Myers R.M."/>
            <person name="Cox D.R."/>
            <person name="Huang X."/>
            <person name="McPherson J.D."/>
            <person name="Mardis E.R."/>
            <person name="Clifton S.W."/>
            <person name="Warren W.C."/>
            <person name="Chinwalla A.T."/>
            <person name="Eddy S.R."/>
            <person name="Marra M.A."/>
            <person name="Ovcharenko I."/>
            <person name="Furey T.S."/>
            <person name="Miller W."/>
            <person name="Eichler E.E."/>
            <person name="Bork P."/>
            <person name="Suyama M."/>
            <person name="Torrents D."/>
            <person name="Waterston R.H."/>
            <person name="Wilson R.K."/>
        </authorList>
    </citation>
    <scope>NUCLEOTIDE SEQUENCE [LARGE SCALE GENOMIC DNA]</scope>
</reference>
<reference key="7">
    <citation type="submission" date="2005-09" db="EMBL/GenBank/DDBJ databases">
        <authorList>
            <person name="Mural R.J."/>
            <person name="Istrail S."/>
            <person name="Sutton G."/>
            <person name="Florea L."/>
            <person name="Halpern A.L."/>
            <person name="Mobarry C.M."/>
            <person name="Lippert R."/>
            <person name="Walenz B."/>
            <person name="Shatkay H."/>
            <person name="Dew I."/>
            <person name="Miller J.R."/>
            <person name="Flanigan M.J."/>
            <person name="Edwards N.J."/>
            <person name="Bolanos R."/>
            <person name="Fasulo D."/>
            <person name="Halldorsson B.V."/>
            <person name="Hannenhalli S."/>
            <person name="Turner R."/>
            <person name="Yooseph S."/>
            <person name="Lu F."/>
            <person name="Nusskern D.R."/>
            <person name="Shue B.C."/>
            <person name="Zheng X.H."/>
            <person name="Zhong F."/>
            <person name="Delcher A.L."/>
            <person name="Huson D.H."/>
            <person name="Kravitz S.A."/>
            <person name="Mouchard L."/>
            <person name="Reinert K."/>
            <person name="Remington K.A."/>
            <person name="Clark A.G."/>
            <person name="Waterman M.S."/>
            <person name="Eichler E.E."/>
            <person name="Adams M.D."/>
            <person name="Hunkapiller M.W."/>
            <person name="Myers E.W."/>
            <person name="Venter J.C."/>
        </authorList>
    </citation>
    <scope>NUCLEOTIDE SEQUENCE [LARGE SCALE GENOMIC DNA]</scope>
</reference>
<reference key="8">
    <citation type="journal article" date="2004" name="Genome Res.">
        <title>The status, quality, and expansion of the NIH full-length cDNA project: the Mammalian Gene Collection (MGC).</title>
        <authorList>
            <consortium name="The MGC Project Team"/>
        </authorList>
    </citation>
    <scope>NUCLEOTIDE SEQUENCE [LARGE SCALE MRNA] (ISOFORM 1)</scope>
    <source>
        <tissue>Skin</tissue>
    </source>
</reference>
<reference key="9">
    <citation type="journal article" date="1998" name="Mol. Biol. Rep.">
        <title>The integrated activities of IRF-2 (HiNF-M), CDP/cut (HiNF-D) and H4TF-2 (HiNF-P) regulate transcription of a cell cycle controlled human histone H4 gene: mechanistic differences between distinct H4 genes.</title>
        <authorList>
            <person name="Aziz F."/>
            <person name="van Wijnen A.J."/>
            <person name="Vaughan P.S."/>
            <person name="Wu S."/>
            <person name="Shakoori A.R."/>
            <person name="Lian J.B."/>
            <person name="Soprano K.J."/>
            <person name="Stein J.L."/>
            <person name="Stein G.S."/>
        </authorList>
    </citation>
    <scope>DNA-BINDING</scope>
    <scope>FUNCTION AS AN ACTIVATOR</scope>
</reference>
<reference key="10">
    <citation type="journal article" date="2000" name="J. Cell. Physiol.">
        <title>Molecular characterization of celtix-1, a bromodomain protein interacting with the transcription factor interferon regulatory factor 2.</title>
        <authorList>
            <person name="Staal A."/>
            <person name="Enserink J.M."/>
            <person name="Stein J.L."/>
            <person name="Stein G.S."/>
            <person name="van Wijnen A.J."/>
        </authorList>
    </citation>
    <scope>INTERACTION WITH BRD7</scope>
</reference>
<reference key="11">
    <citation type="journal article" date="2000" name="Nucleic Acids Res.">
        <title>Cloning of an interferon regulatory factor 2 isoform with different regulatory ability.</title>
        <authorList>
            <person name="Koenig Merediz S.A."/>
            <person name="Schmidt M."/>
            <person name="Hoppe G.J."/>
            <person name="Alfken J."/>
            <person name="Meraro D."/>
            <person name="Levi B.Z."/>
            <person name="Neubauer A."/>
            <person name="Wittig B."/>
        </authorList>
    </citation>
    <scope>ALTERNATIVE SPLICING</scope>
</reference>
<reference key="12">
    <citation type="journal article" date="2003" name="J. Biol. Chem.">
        <title>Interferon regulatory factor-2 regulates cell growth through its acetylation.</title>
        <authorList>
            <person name="Masumi A."/>
            <person name="Yamakawa Y."/>
            <person name="Fukazawa H."/>
            <person name="Ozato K."/>
            <person name="Komuro K."/>
        </authorList>
    </citation>
    <scope>ACETYLATION AT LYS-75 AND LYS-78</scope>
    <scope>INTERACTION WITH CREBBP</scope>
    <scope>FUNCTION</scope>
    <scope>IDENTIFICATION BY MASS SPECTROMETRY</scope>
    <scope>MUTAGENESIS OF LYS-75 AND LYS-78</scope>
</reference>
<reference key="13">
    <citation type="journal article" date="2003" name="Nucleic Acids Res.">
        <title>Identification of novel co-repressor molecules for interferon regulatory factor-2.</title>
        <authorList>
            <person name="Childs K.S."/>
            <person name="Goodbourn S."/>
        </authorList>
    </citation>
    <scope>ALTERNATIVE SPLICING</scope>
    <scope>INTERACTION WITH IRF2BP1 AND IRF2BP2</scope>
</reference>
<reference key="14">
    <citation type="journal article" date="2004" name="Mol. Cell. Biol.">
        <title>Interferon regulatory factor 1 (IRF-1) and IRF-2 distinctively up-regulate gene expression and production of interleukin-7 in human intestinal epithelial cells.</title>
        <authorList>
            <person name="Oshima S."/>
            <person name="Nakamura T."/>
            <person name="Namiki S."/>
            <person name="Okada E."/>
            <person name="Tsuchiya K."/>
            <person name="Okamoto R."/>
            <person name="Yamazaki M."/>
            <person name="Yokota T."/>
            <person name="Aida M."/>
            <person name="Yamaguchi Y."/>
            <person name="Kanai T."/>
            <person name="Handa H."/>
            <person name="Watanabe M."/>
        </authorList>
    </citation>
    <scope>FUNCTION</scope>
    <scope>TISSUE SPECIFICITY</scope>
</reference>
<reference key="15">
    <citation type="journal article" date="2008" name="Biochem. Biophys. Res. Commun.">
        <title>Regulation of IRF2 transcriptional activity by its sumoylation.</title>
        <authorList>
            <person name="Han K.-J."/>
            <person name="Jiang L."/>
            <person name="Shu H.-B."/>
        </authorList>
    </citation>
    <scope>SUMOYLATION AT LYS-137; LYS-166 AND LYS-293</scope>
    <scope>FUNCTION</scope>
    <scope>MUTAGENESIS OF LYS-137; LYS-166 AND LYS-293</scope>
</reference>
<reference key="16">
    <citation type="journal article" date="2014" name="J. Proteomics">
        <title>An enzyme assisted RP-RPLC approach for in-depth analysis of human liver phosphoproteome.</title>
        <authorList>
            <person name="Bian Y."/>
            <person name="Song C."/>
            <person name="Cheng K."/>
            <person name="Dong M."/>
            <person name="Wang F."/>
            <person name="Huang J."/>
            <person name="Sun D."/>
            <person name="Wang L."/>
            <person name="Ye M."/>
            <person name="Zou H."/>
        </authorList>
    </citation>
    <scope>PHOSPHORYLATION [LARGE SCALE ANALYSIS] AT SER-225</scope>
    <scope>IDENTIFICATION BY MASS SPECTROMETRY [LARGE SCALE ANALYSIS]</scope>
    <source>
        <tissue>Liver</tissue>
    </source>
</reference>
<reference key="17">
    <citation type="journal article" date="2015" name="Cell Rep.">
        <title>SUMO-2 orchestrates chromatin modifiers in response to DNA damage.</title>
        <authorList>
            <person name="Hendriks I.A."/>
            <person name="Treffers L.W."/>
            <person name="Verlaan-de Vries M."/>
            <person name="Olsen J.V."/>
            <person name="Vertegaal A.C."/>
        </authorList>
    </citation>
    <scope>SUMOYLATION [LARGE SCALE ANALYSIS] AT LYS-137</scope>
    <scope>IDENTIFICATION BY MASS SPECTROMETRY [LARGE SCALE ANALYSIS]</scope>
</reference>
<reference key="18">
    <citation type="journal article" date="2017" name="Nat. Struct. Mol. Biol.">
        <title>Site-specific mapping of the human SUMO proteome reveals co-modification with phosphorylation.</title>
        <authorList>
            <person name="Hendriks I.A."/>
            <person name="Lyon D."/>
            <person name="Young C."/>
            <person name="Jensen L.J."/>
            <person name="Vertegaal A.C."/>
            <person name="Nielsen M.L."/>
        </authorList>
    </citation>
    <scope>SUMOYLATION [LARGE SCALE ANALYSIS] AT LYS-137 AND LYS-260</scope>
    <scope>IDENTIFICATION BY MASS SPECTROMETRY [LARGE SCALE ANALYSIS]</scope>
</reference>
<comment type="function">
    <text evidence="4 6 7 8">Specifically binds to the upstream regulatory region of type I IFN and IFN-inducible MHC class I genes (the interferon consensus sequence (ICS)) and represses those genes. Also acts as an activator for several genes including H4 and IL7. Constitutively binds to the ISRE promoter to activate IL7. Involved in cell cycle regulation through binding the site II (HiNF-M) promoter region of H4 and activating transcription during cell growth. Antagonizes IRF1 transcriptional activation.</text>
</comment>
<comment type="subunit">
    <text evidence="3 4 5">Interacts with BRD7, IRF2BP1 and IRF2BP2. Interacts with CREBBP in growing cells; the interaction acetylates IRF2 and regulates IRF2-dependent H4 promoter activity.</text>
</comment>
<comment type="interaction">
    <interactant intactId="EBI-2866589">
        <id>P14316</id>
    </interactant>
    <interactant intactId="EBI-987834">
        <id>O95352</id>
        <label>ATG7</label>
    </interactant>
    <organismsDiffer>false</organismsDiffer>
    <experiments>2</experiments>
</comment>
<comment type="interaction">
    <interactant intactId="EBI-2866589">
        <id>P14316</id>
    </interactant>
    <interactant intactId="EBI-2509974">
        <id>P85037</id>
        <label>FOXK1</label>
    </interactant>
    <organismsDiffer>false</organismsDiffer>
    <experiments>4</experiments>
</comment>
<comment type="interaction">
    <interactant intactId="EBI-2866589">
        <id>P14316</id>
    </interactant>
    <interactant intactId="EBI-2509991">
        <id>Q01167</id>
        <label>FOXK2</label>
    </interactant>
    <organismsDiffer>false</organismsDiffer>
    <experiments>5</experiments>
</comment>
<comment type="interaction">
    <interactant intactId="EBI-2866589">
        <id>P14316</id>
    </interactant>
    <interactant intactId="EBI-1759540">
        <id>P16298</id>
        <label>PPP3CB</label>
    </interactant>
    <organismsDiffer>false</organismsDiffer>
    <experiments>2</experiments>
</comment>
<comment type="interaction">
    <interactant intactId="EBI-2866589">
        <id>P14316</id>
    </interactant>
    <interactant intactId="EBI-745958">
        <id>Q5VWN6</id>
        <label>TASOR2</label>
    </interactant>
    <organismsDiffer>false</organismsDiffer>
    <experiments>3</experiments>
</comment>
<comment type="subcellular location">
    <subcellularLocation>
        <location>Nucleus</location>
    </subcellularLocation>
</comment>
<comment type="alternative products">
    <event type="alternative splicing"/>
    <isoform>
        <id>P14316-1</id>
        <name>1</name>
        <sequence type="displayed"/>
    </isoform>
    <isoform>
        <id>P14316-2</id>
        <name>2</name>
        <name>IRF-2s</name>
        <name>IRF-2[S]</name>
        <sequence type="described" ref="VSP_043965"/>
    </isoform>
</comment>
<comment type="tissue specificity">
    <text evidence="6">Expressed throughout the epithelium of the colon. Also expressed in lamina propria.</text>
</comment>
<comment type="induction">
    <text>By viruses and IFN.</text>
</comment>
<comment type="PTM">
    <text evidence="4">Acetylated by CBP/ p300 during cell-growth. Acetylation on Lys-75 is required for stimulation of H4 promoter activity.</text>
</comment>
<comment type="PTM">
    <text evidence="7">The major sites of sumoylation are Lys-137 and Lys-293. Sumoylation with SUMO1 increases its transcriptional repressor activity on IRF1 and diminishes its ability to activate ISRE and H4 promoter.</text>
</comment>
<comment type="miscellaneous">
    <molecule>Isoform 2</molecule>
    <text evidence="9">Unable to bind to IRF2BP1 and IRF2BP2 corepressors and cannot mediate repression.</text>
</comment>
<comment type="similarity">
    <text evidence="1">Belongs to the IRF family.</text>
</comment>
<keyword id="KW-0002">3D-structure</keyword>
<keyword id="KW-0007">Acetylation</keyword>
<keyword id="KW-0010">Activator</keyword>
<keyword id="KW-0025">Alternative splicing</keyword>
<keyword id="KW-0238">DNA-binding</keyword>
<keyword id="KW-1017">Isopeptide bond</keyword>
<keyword id="KW-0539">Nucleus</keyword>
<keyword id="KW-0597">Phosphoprotein</keyword>
<keyword id="KW-1267">Proteomics identification</keyword>
<keyword id="KW-1185">Reference proteome</keyword>
<keyword id="KW-0678">Repressor</keyword>
<keyword id="KW-0804">Transcription</keyword>
<keyword id="KW-0805">Transcription regulation</keyword>
<keyword id="KW-0832">Ubl conjugation</keyword>
<sequence>MPVERMRMRPWLEEQINSNTIPGLKWLNKEKKIFQIPWMHAARHGWDVEKDAPLFRNWAIHTGKHQPGVDKPDPKTWKANFRCAMNSLPDIEEVKDKSIKKGNNAFRVYRMLPLSERPSKKGKKPKTEKEDKVKHIKQEPVESSLGLSNGVSDLSPEYAVLTSTIKNEVDSTVNIIVVGQSHLDSNIENQEIVTNPPDICQVVEVTTESDEQPVSMSELYPLQISPVSSYAESETTDSVPSDEESAEGRPHWRKRNIEGKQYLSNMGTRGSYLLPGMASFVTSNKPDLQVTIKEESNPVPYNSSWPPFQDLPLSSSMTPASSSSRPDRETRASVIKKTSDITQARVKSC</sequence>
<name>IRF2_HUMAN</name>
<dbReference type="EMBL" id="X15949">
    <property type="protein sequence ID" value="CAA34073.1"/>
    <property type="molecule type" value="mRNA"/>
</dbReference>
<dbReference type="EMBL" id="BT007264">
    <property type="protein sequence ID" value="AAP35928.1"/>
    <property type="molecule type" value="mRNA"/>
</dbReference>
<dbReference type="EMBL" id="AK312953">
    <property type="protein sequence ID" value="BAG35793.1"/>
    <property type="molecule type" value="mRNA"/>
</dbReference>
<dbReference type="EMBL" id="CR457077">
    <property type="protein sequence ID" value="CAG33358.1"/>
    <property type="molecule type" value="mRNA"/>
</dbReference>
<dbReference type="EMBL" id="AC099343">
    <property type="status" value="NOT_ANNOTATED_CDS"/>
    <property type="molecule type" value="Genomic_DNA"/>
</dbReference>
<dbReference type="EMBL" id="CH471056">
    <property type="protein sequence ID" value="EAX04677.1"/>
    <property type="molecule type" value="Genomic_DNA"/>
</dbReference>
<dbReference type="EMBL" id="CH471056">
    <property type="protein sequence ID" value="EAX04678.1"/>
    <property type="molecule type" value="Genomic_DNA"/>
</dbReference>
<dbReference type="EMBL" id="CH471056">
    <property type="protein sequence ID" value="EAX04680.1"/>
    <property type="molecule type" value="Genomic_DNA"/>
</dbReference>
<dbReference type="EMBL" id="BC015803">
    <property type="protein sequence ID" value="AAH15803.1"/>
    <property type="molecule type" value="mRNA"/>
</dbReference>
<dbReference type="CCDS" id="CCDS3835.1">
    <molecule id="P14316-1"/>
</dbReference>
<dbReference type="PIR" id="A53340">
    <property type="entry name" value="A53340"/>
</dbReference>
<dbReference type="RefSeq" id="NP_002190.2">
    <molecule id="P14316-1"/>
    <property type="nucleotide sequence ID" value="NM_002199.4"/>
</dbReference>
<dbReference type="PDB" id="8YTG">
    <property type="method" value="X-ray"/>
    <property type="resolution" value="1.45 A"/>
    <property type="chains" value="B=331-338"/>
</dbReference>
<dbReference type="PDBsum" id="8YTG"/>
<dbReference type="BMRB" id="P14316"/>
<dbReference type="SMR" id="P14316"/>
<dbReference type="BioGRID" id="109868">
    <property type="interactions" value="100"/>
</dbReference>
<dbReference type="ELM" id="P14316"/>
<dbReference type="FunCoup" id="P14316">
    <property type="interactions" value="1788"/>
</dbReference>
<dbReference type="IntAct" id="P14316">
    <property type="interactions" value="83"/>
</dbReference>
<dbReference type="MINT" id="P14316"/>
<dbReference type="STRING" id="9606.ENSP00000377218"/>
<dbReference type="GlyGen" id="P14316">
    <property type="glycosylation" value="1 site, 1 O-linked glycan (1 site)"/>
</dbReference>
<dbReference type="iPTMnet" id="P14316"/>
<dbReference type="PhosphoSitePlus" id="P14316"/>
<dbReference type="BioMuta" id="IRF2"/>
<dbReference type="DMDM" id="20141499"/>
<dbReference type="jPOST" id="P14316"/>
<dbReference type="MassIVE" id="P14316"/>
<dbReference type="PaxDb" id="9606-ENSP00000377218"/>
<dbReference type="PeptideAtlas" id="P14316"/>
<dbReference type="ProteomicsDB" id="53043">
    <molecule id="P14316-1"/>
</dbReference>
<dbReference type="ProteomicsDB" id="53044">
    <molecule id="P14316-2"/>
</dbReference>
<dbReference type="Pumba" id="P14316"/>
<dbReference type="Antibodypedia" id="17374">
    <property type="antibodies" value="539 antibodies from 44 providers"/>
</dbReference>
<dbReference type="DNASU" id="3660"/>
<dbReference type="Ensembl" id="ENST00000393593.8">
    <molecule id="P14316-1"/>
    <property type="protein sequence ID" value="ENSP00000377218.3"/>
    <property type="gene ID" value="ENSG00000168310.12"/>
</dbReference>
<dbReference type="Ensembl" id="ENST00000504340.2">
    <molecule id="P14316-1"/>
    <property type="protein sequence ID" value="ENSP00000512878.1"/>
    <property type="gene ID" value="ENSG00000168310.12"/>
</dbReference>
<dbReference type="Ensembl" id="ENST00000510814.6">
    <molecule id="P14316-1"/>
    <property type="protein sequence ID" value="ENSP00000424552.2"/>
    <property type="gene ID" value="ENSG00000168310.12"/>
</dbReference>
<dbReference type="Ensembl" id="ENST00000696840.1">
    <molecule id="P14316-1"/>
    <property type="protein sequence ID" value="ENSP00000512918.1"/>
    <property type="gene ID" value="ENSG00000168310.12"/>
</dbReference>
<dbReference type="Ensembl" id="ENST00000696841.1">
    <molecule id="P14316-1"/>
    <property type="protein sequence ID" value="ENSP00000512954.1"/>
    <property type="gene ID" value="ENSG00000168310.12"/>
</dbReference>
<dbReference type="Ensembl" id="ENST00000696843.1">
    <molecule id="P14316-1"/>
    <property type="protein sequence ID" value="ENSP00000512920.1"/>
    <property type="gene ID" value="ENSG00000168310.12"/>
</dbReference>
<dbReference type="Ensembl" id="ENST00000696845.1">
    <molecule id="P14316-1"/>
    <property type="protein sequence ID" value="ENSP00000512922.1"/>
    <property type="gene ID" value="ENSG00000168310.12"/>
</dbReference>
<dbReference type="Ensembl" id="ENST00000696846.1">
    <molecule id="P14316-1"/>
    <property type="protein sequence ID" value="ENSP00000512923.1"/>
    <property type="gene ID" value="ENSG00000168310.12"/>
</dbReference>
<dbReference type="Ensembl" id="ENST00000696848.1">
    <molecule id="P14316-2"/>
    <property type="protein sequence ID" value="ENSP00000512924.1"/>
    <property type="gene ID" value="ENSG00000168310.12"/>
</dbReference>
<dbReference type="Ensembl" id="ENST00000696849.1">
    <molecule id="P14316-1"/>
    <property type="protein sequence ID" value="ENSP00000512925.1"/>
    <property type="gene ID" value="ENSG00000168310.12"/>
</dbReference>
<dbReference type="Ensembl" id="ENST00000696851.1">
    <molecule id="P14316-1"/>
    <property type="protein sequence ID" value="ENSP00000512927.1"/>
    <property type="gene ID" value="ENSG00000168310.12"/>
</dbReference>
<dbReference type="Ensembl" id="ENST00000696853.1">
    <molecule id="P14316-2"/>
    <property type="protein sequence ID" value="ENSP00000512929.1"/>
    <property type="gene ID" value="ENSG00000168310.12"/>
</dbReference>
<dbReference type="GeneID" id="3660"/>
<dbReference type="KEGG" id="hsa:3660"/>
<dbReference type="MANE-Select" id="ENST00000393593.8">
    <property type="protein sequence ID" value="ENSP00000377218.3"/>
    <property type="RefSeq nucleotide sequence ID" value="NM_002199.4"/>
    <property type="RefSeq protein sequence ID" value="NP_002190.2"/>
</dbReference>
<dbReference type="UCSC" id="uc003iwf.5">
    <molecule id="P14316-1"/>
    <property type="organism name" value="human"/>
</dbReference>
<dbReference type="AGR" id="HGNC:6117"/>
<dbReference type="CTD" id="3660"/>
<dbReference type="DisGeNET" id="3660"/>
<dbReference type="GeneCards" id="IRF2"/>
<dbReference type="HGNC" id="HGNC:6117">
    <property type="gene designation" value="IRF2"/>
</dbReference>
<dbReference type="HPA" id="ENSG00000168310">
    <property type="expression patterns" value="Low tissue specificity"/>
</dbReference>
<dbReference type="MalaCards" id="IRF2"/>
<dbReference type="MIM" id="147576">
    <property type="type" value="gene"/>
</dbReference>
<dbReference type="neXtProt" id="NX_P14316"/>
<dbReference type="OpenTargets" id="ENSG00000168310"/>
<dbReference type="PharmGKB" id="PA29916"/>
<dbReference type="VEuPathDB" id="HostDB:ENSG00000168310"/>
<dbReference type="eggNOG" id="ENOG502QW7C">
    <property type="taxonomic scope" value="Eukaryota"/>
</dbReference>
<dbReference type="GeneTree" id="ENSGT00940000159063"/>
<dbReference type="HOGENOM" id="CLU_056386_0_0_1"/>
<dbReference type="InParanoid" id="P14316"/>
<dbReference type="OMA" id="SSWPPFA"/>
<dbReference type="OrthoDB" id="6538197at2759"/>
<dbReference type="PAN-GO" id="P14316">
    <property type="GO annotations" value="5 GO annotations based on evolutionary models"/>
</dbReference>
<dbReference type="PhylomeDB" id="P14316"/>
<dbReference type="TreeFam" id="TF328512"/>
<dbReference type="PathwayCommons" id="P14316"/>
<dbReference type="Reactome" id="R-HSA-5620971">
    <property type="pathway name" value="Pyroptosis"/>
</dbReference>
<dbReference type="Reactome" id="R-HSA-877300">
    <property type="pathway name" value="Interferon gamma signaling"/>
</dbReference>
<dbReference type="Reactome" id="R-HSA-909733">
    <property type="pathway name" value="Interferon alpha/beta signaling"/>
</dbReference>
<dbReference type="Reactome" id="R-HSA-983231">
    <property type="pathway name" value="Factors involved in megakaryocyte development and platelet production"/>
</dbReference>
<dbReference type="SignaLink" id="P14316"/>
<dbReference type="SIGNOR" id="P14316"/>
<dbReference type="BioGRID-ORCS" id="3660">
    <property type="hits" value="43 hits in 1196 CRISPR screens"/>
</dbReference>
<dbReference type="ChiTaRS" id="IRF2">
    <property type="organism name" value="human"/>
</dbReference>
<dbReference type="GeneWiki" id="IRF2"/>
<dbReference type="GenomeRNAi" id="3660"/>
<dbReference type="Pharos" id="P14316">
    <property type="development level" value="Tbio"/>
</dbReference>
<dbReference type="PRO" id="PR:P14316"/>
<dbReference type="Proteomes" id="UP000005640">
    <property type="component" value="Chromosome 4"/>
</dbReference>
<dbReference type="RNAct" id="P14316">
    <property type="molecule type" value="protein"/>
</dbReference>
<dbReference type="Bgee" id="ENSG00000168310">
    <property type="expression patterns" value="Expressed in monocyte and 163 other cell types or tissues"/>
</dbReference>
<dbReference type="ExpressionAtlas" id="P14316">
    <property type="expression patterns" value="baseline and differential"/>
</dbReference>
<dbReference type="GO" id="GO:0000785">
    <property type="term" value="C:chromatin"/>
    <property type="evidence" value="ECO:0000247"/>
    <property type="project" value="NTNU_SB"/>
</dbReference>
<dbReference type="GO" id="GO:0005829">
    <property type="term" value="C:cytosol"/>
    <property type="evidence" value="ECO:0000314"/>
    <property type="project" value="HPA"/>
</dbReference>
<dbReference type="GO" id="GO:0005925">
    <property type="term" value="C:focal adhesion"/>
    <property type="evidence" value="ECO:0000314"/>
    <property type="project" value="HPA"/>
</dbReference>
<dbReference type="GO" id="GO:0005654">
    <property type="term" value="C:nucleoplasm"/>
    <property type="evidence" value="ECO:0000314"/>
    <property type="project" value="HPA"/>
</dbReference>
<dbReference type="GO" id="GO:0005634">
    <property type="term" value="C:nucleus"/>
    <property type="evidence" value="ECO:0000318"/>
    <property type="project" value="GO_Central"/>
</dbReference>
<dbReference type="GO" id="GO:0003677">
    <property type="term" value="F:DNA binding"/>
    <property type="evidence" value="ECO:0000314"/>
    <property type="project" value="UniProtKB"/>
</dbReference>
<dbReference type="GO" id="GO:0001228">
    <property type="term" value="F:DNA-binding transcription activator activity, RNA polymerase II-specific"/>
    <property type="evidence" value="ECO:0000315"/>
    <property type="project" value="NTNU_SB"/>
</dbReference>
<dbReference type="GO" id="GO:0003700">
    <property type="term" value="F:DNA-binding transcription factor activity"/>
    <property type="evidence" value="ECO:0000315"/>
    <property type="project" value="UniProtKB"/>
</dbReference>
<dbReference type="GO" id="GO:0000981">
    <property type="term" value="F:DNA-binding transcription factor activity, RNA polymerase II-specific"/>
    <property type="evidence" value="ECO:0000247"/>
    <property type="project" value="NTNU_SB"/>
</dbReference>
<dbReference type="GO" id="GO:0000978">
    <property type="term" value="F:RNA polymerase II cis-regulatory region sequence-specific DNA binding"/>
    <property type="evidence" value="ECO:0000318"/>
    <property type="project" value="GO_Central"/>
</dbReference>
<dbReference type="GO" id="GO:0000977">
    <property type="term" value="F:RNA polymerase II transcription regulatory region sequence-specific DNA binding"/>
    <property type="evidence" value="ECO:0000315"/>
    <property type="project" value="NTNU_SB"/>
</dbReference>
<dbReference type="GO" id="GO:1990837">
    <property type="term" value="F:sequence-specific double-stranded DNA binding"/>
    <property type="evidence" value="ECO:0000314"/>
    <property type="project" value="ARUK-UCL"/>
</dbReference>
<dbReference type="GO" id="GO:0008283">
    <property type="term" value="P:cell population proliferation"/>
    <property type="evidence" value="ECO:0000304"/>
    <property type="project" value="ProtInc"/>
</dbReference>
<dbReference type="GO" id="GO:0051607">
    <property type="term" value="P:defense response to virus"/>
    <property type="evidence" value="ECO:0000314"/>
    <property type="project" value="UniProtKB"/>
</dbReference>
<dbReference type="GO" id="GO:0002376">
    <property type="term" value="P:immune system process"/>
    <property type="evidence" value="ECO:0000318"/>
    <property type="project" value="GO_Central"/>
</dbReference>
<dbReference type="GO" id="GO:0000122">
    <property type="term" value="P:negative regulation of transcription by RNA polymerase II"/>
    <property type="evidence" value="ECO:0000304"/>
    <property type="project" value="ProtInc"/>
</dbReference>
<dbReference type="GO" id="GO:0045944">
    <property type="term" value="P:positive regulation of transcription by RNA polymerase II"/>
    <property type="evidence" value="ECO:0000315"/>
    <property type="project" value="NTNU_SB"/>
</dbReference>
<dbReference type="GO" id="GO:0006355">
    <property type="term" value="P:regulation of DNA-templated transcription"/>
    <property type="evidence" value="ECO:0000315"/>
    <property type="project" value="UniProtKB"/>
</dbReference>
<dbReference type="GO" id="GO:0006357">
    <property type="term" value="P:regulation of transcription by RNA polymerase II"/>
    <property type="evidence" value="ECO:0000318"/>
    <property type="project" value="GO_Central"/>
</dbReference>
<dbReference type="CDD" id="cd00103">
    <property type="entry name" value="IRF"/>
    <property type="match status" value="1"/>
</dbReference>
<dbReference type="FunFam" id="1.10.10.10:FF:000065">
    <property type="entry name" value="Interferon regulatory factor"/>
    <property type="match status" value="1"/>
</dbReference>
<dbReference type="Gene3D" id="1.10.10.10">
    <property type="entry name" value="Winged helix-like DNA-binding domain superfamily/Winged helix DNA-binding domain"/>
    <property type="match status" value="1"/>
</dbReference>
<dbReference type="InterPro" id="IPR019817">
    <property type="entry name" value="Interferon_reg_fac_CS"/>
</dbReference>
<dbReference type="InterPro" id="IPR001346">
    <property type="entry name" value="Interferon_reg_fact_DNA-bd_dom"/>
</dbReference>
<dbReference type="InterPro" id="IPR017431">
    <property type="entry name" value="IRF1/IRF2"/>
</dbReference>
<dbReference type="InterPro" id="IPR036388">
    <property type="entry name" value="WH-like_DNA-bd_sf"/>
</dbReference>
<dbReference type="InterPro" id="IPR036390">
    <property type="entry name" value="WH_DNA-bd_sf"/>
</dbReference>
<dbReference type="PANTHER" id="PTHR11949">
    <property type="entry name" value="INTERFERON REGULATORY FACTOR"/>
    <property type="match status" value="1"/>
</dbReference>
<dbReference type="PANTHER" id="PTHR11949:SF22">
    <property type="entry name" value="INTERFERON REGULATORY FACTOR 2"/>
    <property type="match status" value="1"/>
</dbReference>
<dbReference type="Pfam" id="PF00605">
    <property type="entry name" value="IRF"/>
    <property type="match status" value="1"/>
</dbReference>
<dbReference type="PIRSF" id="PIRSF038196">
    <property type="entry name" value="IFN_RF1/2"/>
    <property type="match status" value="1"/>
</dbReference>
<dbReference type="PRINTS" id="PR00267">
    <property type="entry name" value="INTFRNREGFCT"/>
</dbReference>
<dbReference type="SMART" id="SM00348">
    <property type="entry name" value="IRF"/>
    <property type="match status" value="1"/>
</dbReference>
<dbReference type="SUPFAM" id="SSF46785">
    <property type="entry name" value="Winged helix' DNA-binding domain"/>
    <property type="match status" value="1"/>
</dbReference>
<dbReference type="PROSITE" id="PS00601">
    <property type="entry name" value="IRF_1"/>
    <property type="match status" value="1"/>
</dbReference>
<dbReference type="PROSITE" id="PS51507">
    <property type="entry name" value="IRF_2"/>
    <property type="match status" value="1"/>
</dbReference>
<proteinExistence type="evidence at protein level"/>
<evidence type="ECO:0000255" key="1">
    <source>
        <dbReference type="PROSITE-ProRule" id="PRU00840"/>
    </source>
</evidence>
<evidence type="ECO:0000256" key="2">
    <source>
        <dbReference type="SAM" id="MobiDB-lite"/>
    </source>
</evidence>
<evidence type="ECO:0000269" key="3">
    <source>
    </source>
</evidence>
<evidence type="ECO:0000269" key="4">
    <source>
    </source>
</evidence>
<evidence type="ECO:0000269" key="5">
    <source>
    </source>
</evidence>
<evidence type="ECO:0000269" key="6">
    <source>
    </source>
</evidence>
<evidence type="ECO:0000269" key="7">
    <source>
    </source>
</evidence>
<evidence type="ECO:0000269" key="8">
    <source>
    </source>
</evidence>
<evidence type="ECO:0000305" key="9"/>
<evidence type="ECO:0007744" key="10">
    <source>
    </source>
</evidence>
<evidence type="ECO:0007744" key="11">
    <source>
    </source>
</evidence>
<evidence type="ECO:0007744" key="12">
    <source>
    </source>
</evidence>
<accession>P14316</accession>
<accession>D6RCK5</accession>
<accession>H0Y8S3</accession>
<accession>Q6IAS7</accession>
<accession>Q96B99</accession>